<accession>Q9TL17</accession>
<proteinExistence type="inferred from homology"/>
<dbReference type="EMBL" id="AF137379">
    <property type="protein sequence ID" value="AAD54799.1"/>
    <property type="molecule type" value="Genomic_DNA"/>
</dbReference>
<dbReference type="RefSeq" id="NP_050828.1">
    <property type="nucleotide sequence ID" value="NC_000927.1"/>
</dbReference>
<dbReference type="SMR" id="Q9TL17"/>
<dbReference type="GeneID" id="801992"/>
<dbReference type="GO" id="GO:0009507">
    <property type="term" value="C:chloroplast"/>
    <property type="evidence" value="ECO:0007669"/>
    <property type="project" value="UniProtKB-SubCell"/>
</dbReference>
<dbReference type="GO" id="GO:1990904">
    <property type="term" value="C:ribonucleoprotein complex"/>
    <property type="evidence" value="ECO:0007669"/>
    <property type="project" value="UniProtKB-KW"/>
</dbReference>
<dbReference type="GO" id="GO:0005840">
    <property type="term" value="C:ribosome"/>
    <property type="evidence" value="ECO:0007669"/>
    <property type="project" value="UniProtKB-KW"/>
</dbReference>
<dbReference type="GO" id="GO:0019843">
    <property type="term" value="F:rRNA binding"/>
    <property type="evidence" value="ECO:0007669"/>
    <property type="project" value="UniProtKB-UniRule"/>
</dbReference>
<dbReference type="GO" id="GO:0003735">
    <property type="term" value="F:structural constituent of ribosome"/>
    <property type="evidence" value="ECO:0007669"/>
    <property type="project" value="InterPro"/>
</dbReference>
<dbReference type="GO" id="GO:0006412">
    <property type="term" value="P:translation"/>
    <property type="evidence" value="ECO:0007669"/>
    <property type="project" value="UniProtKB-UniRule"/>
</dbReference>
<dbReference type="Gene3D" id="3.30.70.330">
    <property type="match status" value="1"/>
</dbReference>
<dbReference type="HAMAP" id="MF_01369_B">
    <property type="entry name" value="Ribosomal_uL23_B"/>
    <property type="match status" value="1"/>
</dbReference>
<dbReference type="InterPro" id="IPR012677">
    <property type="entry name" value="Nucleotide-bd_a/b_plait_sf"/>
</dbReference>
<dbReference type="InterPro" id="IPR013025">
    <property type="entry name" value="Ribosomal_uL23-like"/>
</dbReference>
<dbReference type="InterPro" id="IPR012678">
    <property type="entry name" value="Ribosomal_uL23/eL15/eS24_sf"/>
</dbReference>
<dbReference type="InterPro" id="IPR001014">
    <property type="entry name" value="Ribosomal_uL23_CS"/>
</dbReference>
<dbReference type="NCBIfam" id="NF004363">
    <property type="entry name" value="PRK05738.2-4"/>
    <property type="match status" value="1"/>
</dbReference>
<dbReference type="PANTHER" id="PTHR11620">
    <property type="entry name" value="60S RIBOSOMAL PROTEIN L23A"/>
    <property type="match status" value="1"/>
</dbReference>
<dbReference type="Pfam" id="PF00276">
    <property type="entry name" value="Ribosomal_L23"/>
    <property type="match status" value="1"/>
</dbReference>
<dbReference type="SUPFAM" id="SSF54189">
    <property type="entry name" value="Ribosomal proteins S24e, L23 and L15e"/>
    <property type="match status" value="1"/>
</dbReference>
<dbReference type="PROSITE" id="PS00050">
    <property type="entry name" value="RIBOSOMAL_L23"/>
    <property type="match status" value="1"/>
</dbReference>
<protein>
    <recommendedName>
        <fullName evidence="2">Large ribosomal subunit protein uL23c</fullName>
    </recommendedName>
    <alternativeName>
        <fullName>50S ribosomal protein L23, chloroplastic</fullName>
    </alternativeName>
</protein>
<sequence length="92" mass="10778">MIIDLVKRPVITEKATRILEKNQYTFDVELSLTKPKIKALIEKAFKVEVVSVNTHRPPRRKRRLGTTQGYLPRYKRAIITLKRGFMIPLTPF</sequence>
<keyword id="KW-0150">Chloroplast</keyword>
<keyword id="KW-0934">Plastid</keyword>
<keyword id="KW-0687">Ribonucleoprotein</keyword>
<keyword id="KW-0689">Ribosomal protein</keyword>
<keyword id="KW-0694">RNA-binding</keyword>
<keyword id="KW-0699">rRNA-binding</keyword>
<comment type="function">
    <text evidence="1">Binds to 23S rRNA.</text>
</comment>
<comment type="subunit">
    <text evidence="1">Part of the 50S ribosomal subunit.</text>
</comment>
<comment type="subcellular location">
    <subcellularLocation>
        <location>Plastid</location>
        <location>Chloroplast</location>
    </subcellularLocation>
</comment>
<comment type="similarity">
    <text evidence="2">Belongs to the universal ribosomal protein uL23 family.</text>
</comment>
<organism>
    <name type="scientific">Nephroselmis olivacea</name>
    <name type="common">Green alga</name>
    <dbReference type="NCBI Taxonomy" id="31312"/>
    <lineage>
        <taxon>Eukaryota</taxon>
        <taxon>Viridiplantae</taxon>
        <taxon>Chlorophyta</taxon>
        <taxon>Nephroselmidophyceae</taxon>
        <taxon>Nephroselmidales</taxon>
        <taxon>Nephroselmidaceae</taxon>
        <taxon>Nephroselmis</taxon>
    </lineage>
</organism>
<evidence type="ECO:0000250" key="1"/>
<evidence type="ECO:0000305" key="2"/>
<reference key="1">
    <citation type="journal article" date="1999" name="Proc. Natl. Acad. Sci. U.S.A.">
        <title>The complete chloroplast DNA sequence of the green alga Nephroselmis olivacea: insights into the architecture of ancestral chloroplast genomes.</title>
        <authorList>
            <person name="Turmel M."/>
            <person name="Otis C."/>
            <person name="Lemieux C."/>
        </authorList>
    </citation>
    <scope>NUCLEOTIDE SEQUENCE [LARGE SCALE GENOMIC DNA]</scope>
    <source>
        <strain>NIES-484 / S-N-5-8</strain>
    </source>
</reference>
<feature type="chain" id="PRO_0000129456" description="Large ribosomal subunit protein uL23c">
    <location>
        <begin position="1"/>
        <end position="92"/>
    </location>
</feature>
<geneLocation type="chloroplast"/>
<name>RK23_NEPOL</name>
<gene>
    <name type="primary">rpl23</name>
</gene>